<sequence length="356" mass="37856">MAIDENKQKALAAALGQIEKQFGKGSIMRLGEDRSMDVETISTGSLSLDIALGAGGLPMGRIVEIYGPESSGKTTLALQVIAAAQREGKTCAFIDAEHALDPIYAKKLGVDIDNLLCSQPDTGEQALEICDALTRSGAVDVIIVDSVAALTPKAEIEGEIGDSHMGLAARMMSQAMRKLAGNLKNANTLLIFINQIRMKIGVMFGNPETTTGGNALKFYASVRLDIRRIGAVKDGDVVVGSETRVKVVKNKIAAPFKQAEFQILYGEGININGELVDLGVKHKLIEKAGAWYSYNGDKIGQGKANASNYLKENPAIAAELDKKLREMLLNGGNGEQPVAAATAEFADGADETNEEF</sequence>
<accession>A4TQ50</accession>
<organism>
    <name type="scientific">Yersinia pestis (strain Pestoides F)</name>
    <dbReference type="NCBI Taxonomy" id="386656"/>
    <lineage>
        <taxon>Bacteria</taxon>
        <taxon>Pseudomonadati</taxon>
        <taxon>Pseudomonadota</taxon>
        <taxon>Gammaproteobacteria</taxon>
        <taxon>Enterobacterales</taxon>
        <taxon>Yersiniaceae</taxon>
        <taxon>Yersinia</taxon>
    </lineage>
</organism>
<dbReference type="EMBL" id="CP000668">
    <property type="protein sequence ID" value="ABP41412.1"/>
    <property type="molecule type" value="Genomic_DNA"/>
</dbReference>
<dbReference type="RefSeq" id="WP_011906404.1">
    <property type="nucleotide sequence ID" value="NZ_CP009715.1"/>
</dbReference>
<dbReference type="SMR" id="A4TQ50"/>
<dbReference type="KEGG" id="ypp:YPDSF_3054"/>
<dbReference type="PATRIC" id="fig|386656.14.peg.1306"/>
<dbReference type="GO" id="GO:0005829">
    <property type="term" value="C:cytosol"/>
    <property type="evidence" value="ECO:0007669"/>
    <property type="project" value="TreeGrafter"/>
</dbReference>
<dbReference type="GO" id="GO:0005524">
    <property type="term" value="F:ATP binding"/>
    <property type="evidence" value="ECO:0007669"/>
    <property type="project" value="UniProtKB-UniRule"/>
</dbReference>
<dbReference type="GO" id="GO:0016887">
    <property type="term" value="F:ATP hydrolysis activity"/>
    <property type="evidence" value="ECO:0007669"/>
    <property type="project" value="InterPro"/>
</dbReference>
<dbReference type="GO" id="GO:0140664">
    <property type="term" value="F:ATP-dependent DNA damage sensor activity"/>
    <property type="evidence" value="ECO:0007669"/>
    <property type="project" value="InterPro"/>
</dbReference>
<dbReference type="GO" id="GO:0003684">
    <property type="term" value="F:damaged DNA binding"/>
    <property type="evidence" value="ECO:0007669"/>
    <property type="project" value="UniProtKB-UniRule"/>
</dbReference>
<dbReference type="GO" id="GO:0003697">
    <property type="term" value="F:single-stranded DNA binding"/>
    <property type="evidence" value="ECO:0007669"/>
    <property type="project" value="UniProtKB-UniRule"/>
</dbReference>
<dbReference type="GO" id="GO:0006310">
    <property type="term" value="P:DNA recombination"/>
    <property type="evidence" value="ECO:0007669"/>
    <property type="project" value="UniProtKB-UniRule"/>
</dbReference>
<dbReference type="GO" id="GO:0006281">
    <property type="term" value="P:DNA repair"/>
    <property type="evidence" value="ECO:0007669"/>
    <property type="project" value="UniProtKB-UniRule"/>
</dbReference>
<dbReference type="GO" id="GO:0009432">
    <property type="term" value="P:SOS response"/>
    <property type="evidence" value="ECO:0007669"/>
    <property type="project" value="UniProtKB-UniRule"/>
</dbReference>
<dbReference type="CDD" id="cd00983">
    <property type="entry name" value="RecA"/>
    <property type="match status" value="1"/>
</dbReference>
<dbReference type="FunFam" id="3.40.50.300:FF:000087">
    <property type="entry name" value="Recombinase RecA"/>
    <property type="match status" value="1"/>
</dbReference>
<dbReference type="Gene3D" id="3.40.50.300">
    <property type="entry name" value="P-loop containing nucleotide triphosphate hydrolases"/>
    <property type="match status" value="1"/>
</dbReference>
<dbReference type="HAMAP" id="MF_00268">
    <property type="entry name" value="RecA"/>
    <property type="match status" value="1"/>
</dbReference>
<dbReference type="InterPro" id="IPR003593">
    <property type="entry name" value="AAA+_ATPase"/>
</dbReference>
<dbReference type="InterPro" id="IPR013765">
    <property type="entry name" value="DNA_recomb/repair_RecA"/>
</dbReference>
<dbReference type="InterPro" id="IPR020584">
    <property type="entry name" value="DNA_recomb/repair_RecA_CS"/>
</dbReference>
<dbReference type="InterPro" id="IPR027417">
    <property type="entry name" value="P-loop_NTPase"/>
</dbReference>
<dbReference type="InterPro" id="IPR049261">
    <property type="entry name" value="RecA-like_C"/>
</dbReference>
<dbReference type="InterPro" id="IPR049428">
    <property type="entry name" value="RecA-like_N"/>
</dbReference>
<dbReference type="InterPro" id="IPR020588">
    <property type="entry name" value="RecA_ATP-bd"/>
</dbReference>
<dbReference type="InterPro" id="IPR023400">
    <property type="entry name" value="RecA_C_sf"/>
</dbReference>
<dbReference type="InterPro" id="IPR020587">
    <property type="entry name" value="RecA_monomer-monomer_interface"/>
</dbReference>
<dbReference type="NCBIfam" id="TIGR02012">
    <property type="entry name" value="tigrfam_recA"/>
    <property type="match status" value="1"/>
</dbReference>
<dbReference type="PANTHER" id="PTHR45900:SF1">
    <property type="entry name" value="MITOCHONDRIAL DNA REPAIR PROTEIN RECA HOMOLOG-RELATED"/>
    <property type="match status" value="1"/>
</dbReference>
<dbReference type="PANTHER" id="PTHR45900">
    <property type="entry name" value="RECA"/>
    <property type="match status" value="1"/>
</dbReference>
<dbReference type="Pfam" id="PF00154">
    <property type="entry name" value="RecA"/>
    <property type="match status" value="1"/>
</dbReference>
<dbReference type="Pfam" id="PF21096">
    <property type="entry name" value="RecA_C"/>
    <property type="match status" value="1"/>
</dbReference>
<dbReference type="PRINTS" id="PR00142">
    <property type="entry name" value="RECA"/>
</dbReference>
<dbReference type="SMART" id="SM00382">
    <property type="entry name" value="AAA"/>
    <property type="match status" value="1"/>
</dbReference>
<dbReference type="SUPFAM" id="SSF52540">
    <property type="entry name" value="P-loop containing nucleoside triphosphate hydrolases"/>
    <property type="match status" value="1"/>
</dbReference>
<dbReference type="SUPFAM" id="SSF54752">
    <property type="entry name" value="RecA protein, C-terminal domain"/>
    <property type="match status" value="1"/>
</dbReference>
<dbReference type="PROSITE" id="PS00321">
    <property type="entry name" value="RECA_1"/>
    <property type="match status" value="1"/>
</dbReference>
<dbReference type="PROSITE" id="PS50162">
    <property type="entry name" value="RECA_2"/>
    <property type="match status" value="1"/>
</dbReference>
<dbReference type="PROSITE" id="PS50163">
    <property type="entry name" value="RECA_3"/>
    <property type="match status" value="1"/>
</dbReference>
<comment type="function">
    <text evidence="1">Can catalyze the hydrolysis of ATP in the presence of single-stranded DNA, the ATP-dependent uptake of single-stranded DNA by duplex DNA, and the ATP-dependent hybridization of homologous single-stranded DNAs. It interacts with LexA causing its activation and leading to its autocatalytic cleavage.</text>
</comment>
<comment type="subcellular location">
    <subcellularLocation>
        <location evidence="1">Cytoplasm</location>
    </subcellularLocation>
</comment>
<comment type="similarity">
    <text evidence="1">Belongs to the RecA family.</text>
</comment>
<name>RECA_YERPP</name>
<protein>
    <recommendedName>
        <fullName evidence="1">Protein RecA</fullName>
    </recommendedName>
    <alternativeName>
        <fullName evidence="1">Recombinase A</fullName>
    </alternativeName>
</protein>
<evidence type="ECO:0000255" key="1">
    <source>
        <dbReference type="HAMAP-Rule" id="MF_00268"/>
    </source>
</evidence>
<reference key="1">
    <citation type="submission" date="2007-02" db="EMBL/GenBank/DDBJ databases">
        <title>Complete sequence of chromosome of Yersinia pestis Pestoides F.</title>
        <authorList>
            <consortium name="US DOE Joint Genome Institute"/>
            <person name="Copeland A."/>
            <person name="Lucas S."/>
            <person name="Lapidus A."/>
            <person name="Barry K."/>
            <person name="Detter J.C."/>
            <person name="Glavina del Rio T."/>
            <person name="Hammon N."/>
            <person name="Israni S."/>
            <person name="Dalin E."/>
            <person name="Tice H."/>
            <person name="Pitluck S."/>
            <person name="Di Bartolo G."/>
            <person name="Chain P."/>
            <person name="Malfatti S."/>
            <person name="Shin M."/>
            <person name="Vergez L."/>
            <person name="Schmutz J."/>
            <person name="Larimer F."/>
            <person name="Land M."/>
            <person name="Hauser L."/>
            <person name="Worsham P."/>
            <person name="Chu M."/>
            <person name="Bearden S."/>
            <person name="Garcia E."/>
            <person name="Richardson P."/>
        </authorList>
    </citation>
    <scope>NUCLEOTIDE SEQUENCE [LARGE SCALE GENOMIC DNA]</scope>
    <source>
        <strain>Pestoides F</strain>
    </source>
</reference>
<keyword id="KW-0067">ATP-binding</keyword>
<keyword id="KW-0963">Cytoplasm</keyword>
<keyword id="KW-0227">DNA damage</keyword>
<keyword id="KW-0233">DNA recombination</keyword>
<keyword id="KW-0234">DNA repair</keyword>
<keyword id="KW-0238">DNA-binding</keyword>
<keyword id="KW-0547">Nucleotide-binding</keyword>
<keyword id="KW-0742">SOS response</keyword>
<feature type="chain" id="PRO_1000048037" description="Protein RecA">
    <location>
        <begin position="1"/>
        <end position="356"/>
    </location>
</feature>
<feature type="binding site" evidence="1">
    <location>
        <begin position="67"/>
        <end position="74"/>
    </location>
    <ligand>
        <name>ATP</name>
        <dbReference type="ChEBI" id="CHEBI:30616"/>
    </ligand>
</feature>
<gene>
    <name evidence="1" type="primary">recA</name>
    <name type="ordered locus">YPDSF_3054</name>
</gene>
<proteinExistence type="inferred from homology"/>